<name>RPOZ_HYDCU</name>
<organism>
    <name type="scientific">Hydrogenovibrio crunogenus (strain DSM 25203 / XCL-2)</name>
    <name type="common">Thiomicrospira crunogena</name>
    <dbReference type="NCBI Taxonomy" id="317025"/>
    <lineage>
        <taxon>Bacteria</taxon>
        <taxon>Pseudomonadati</taxon>
        <taxon>Pseudomonadota</taxon>
        <taxon>Gammaproteobacteria</taxon>
        <taxon>Thiotrichales</taxon>
        <taxon>Piscirickettsiaceae</taxon>
        <taxon>Hydrogenovibrio</taxon>
    </lineage>
</organism>
<protein>
    <recommendedName>
        <fullName evidence="1">DNA-directed RNA polymerase subunit omega</fullName>
        <shortName evidence="1">RNAP omega subunit</shortName>
        <ecNumber evidence="1">2.7.7.6</ecNumber>
    </recommendedName>
    <alternativeName>
        <fullName evidence="1">RNA polymerase omega subunit</fullName>
    </alternativeName>
    <alternativeName>
        <fullName evidence="1">Transcriptase subunit omega</fullName>
    </alternativeName>
</protein>
<dbReference type="EC" id="2.7.7.6" evidence="1"/>
<dbReference type="EMBL" id="CP000109">
    <property type="protein sequence ID" value="ABB42731.1"/>
    <property type="molecule type" value="Genomic_DNA"/>
</dbReference>
<dbReference type="SMR" id="Q31DP2"/>
<dbReference type="STRING" id="317025.Tcr_2143"/>
<dbReference type="KEGG" id="tcx:Tcr_2143"/>
<dbReference type="eggNOG" id="COG1758">
    <property type="taxonomic scope" value="Bacteria"/>
</dbReference>
<dbReference type="HOGENOM" id="CLU_125406_5_2_6"/>
<dbReference type="OrthoDB" id="9796300at2"/>
<dbReference type="GO" id="GO:0000428">
    <property type="term" value="C:DNA-directed RNA polymerase complex"/>
    <property type="evidence" value="ECO:0007669"/>
    <property type="project" value="UniProtKB-KW"/>
</dbReference>
<dbReference type="GO" id="GO:0003677">
    <property type="term" value="F:DNA binding"/>
    <property type="evidence" value="ECO:0007669"/>
    <property type="project" value="UniProtKB-UniRule"/>
</dbReference>
<dbReference type="GO" id="GO:0003899">
    <property type="term" value="F:DNA-directed RNA polymerase activity"/>
    <property type="evidence" value="ECO:0007669"/>
    <property type="project" value="UniProtKB-UniRule"/>
</dbReference>
<dbReference type="GO" id="GO:0006351">
    <property type="term" value="P:DNA-templated transcription"/>
    <property type="evidence" value="ECO:0007669"/>
    <property type="project" value="UniProtKB-UniRule"/>
</dbReference>
<dbReference type="Gene3D" id="3.90.940.10">
    <property type="match status" value="1"/>
</dbReference>
<dbReference type="HAMAP" id="MF_00366">
    <property type="entry name" value="RNApol_bact_RpoZ"/>
    <property type="match status" value="1"/>
</dbReference>
<dbReference type="InterPro" id="IPR003716">
    <property type="entry name" value="DNA-dir_RNA_pol_omega"/>
</dbReference>
<dbReference type="InterPro" id="IPR006110">
    <property type="entry name" value="Pol_omega/Rpo6/RPB6"/>
</dbReference>
<dbReference type="InterPro" id="IPR036161">
    <property type="entry name" value="RPB6/omega-like_sf"/>
</dbReference>
<dbReference type="NCBIfam" id="TIGR00690">
    <property type="entry name" value="rpoZ"/>
    <property type="match status" value="1"/>
</dbReference>
<dbReference type="PANTHER" id="PTHR34476">
    <property type="entry name" value="DNA-DIRECTED RNA POLYMERASE SUBUNIT OMEGA"/>
    <property type="match status" value="1"/>
</dbReference>
<dbReference type="PANTHER" id="PTHR34476:SF1">
    <property type="entry name" value="DNA-DIRECTED RNA POLYMERASE SUBUNIT OMEGA"/>
    <property type="match status" value="1"/>
</dbReference>
<dbReference type="Pfam" id="PF01192">
    <property type="entry name" value="RNA_pol_Rpb6"/>
    <property type="match status" value="1"/>
</dbReference>
<dbReference type="SMART" id="SM01409">
    <property type="entry name" value="RNA_pol_Rpb6"/>
    <property type="match status" value="1"/>
</dbReference>
<dbReference type="SUPFAM" id="SSF63562">
    <property type="entry name" value="RPB6/omega subunit-like"/>
    <property type="match status" value="1"/>
</dbReference>
<evidence type="ECO:0000255" key="1">
    <source>
        <dbReference type="HAMAP-Rule" id="MF_00366"/>
    </source>
</evidence>
<comment type="function">
    <text evidence="1">Promotes RNA polymerase assembly. Latches the N- and C-terminal regions of the beta' subunit thereby facilitating its interaction with the beta and alpha subunits.</text>
</comment>
<comment type="catalytic activity">
    <reaction evidence="1">
        <text>RNA(n) + a ribonucleoside 5'-triphosphate = RNA(n+1) + diphosphate</text>
        <dbReference type="Rhea" id="RHEA:21248"/>
        <dbReference type="Rhea" id="RHEA-COMP:14527"/>
        <dbReference type="Rhea" id="RHEA-COMP:17342"/>
        <dbReference type="ChEBI" id="CHEBI:33019"/>
        <dbReference type="ChEBI" id="CHEBI:61557"/>
        <dbReference type="ChEBI" id="CHEBI:140395"/>
        <dbReference type="EC" id="2.7.7.6"/>
    </reaction>
</comment>
<comment type="subunit">
    <text evidence="1">The RNAP catalytic core consists of 2 alpha, 1 beta, 1 beta' and 1 omega subunit. When a sigma factor is associated with the core the holoenzyme is formed, which can initiate transcription.</text>
</comment>
<comment type="similarity">
    <text evidence="1">Belongs to the RNA polymerase subunit omega family.</text>
</comment>
<keyword id="KW-0240">DNA-directed RNA polymerase</keyword>
<keyword id="KW-0548">Nucleotidyltransferase</keyword>
<keyword id="KW-0804">Transcription</keyword>
<keyword id="KW-0808">Transferase</keyword>
<proteinExistence type="inferred from homology"/>
<accession>Q31DP2</accession>
<sequence length="74" mass="8379">MARVTVEDCLDQVENRFELVILSSKRARQLSNGAEPTLDWDKDKPTVMALRELAENTINKEVVMSDPDTPPFFG</sequence>
<feature type="chain" id="PRO_0000237526" description="DNA-directed RNA polymerase subunit omega">
    <location>
        <begin position="1"/>
        <end position="74"/>
    </location>
</feature>
<gene>
    <name evidence="1" type="primary">rpoZ</name>
    <name type="ordered locus">Tcr_2143</name>
</gene>
<reference key="1">
    <citation type="journal article" date="2006" name="PLoS Biol.">
        <title>The genome of deep-sea vent chemolithoautotroph Thiomicrospira crunogena XCL-2.</title>
        <authorList>
            <person name="Scott K.M."/>
            <person name="Sievert S.M."/>
            <person name="Abril F.N."/>
            <person name="Ball L.A."/>
            <person name="Barrett C.J."/>
            <person name="Blake R.A."/>
            <person name="Boller A.J."/>
            <person name="Chain P.S.G."/>
            <person name="Clark J.A."/>
            <person name="Davis C.R."/>
            <person name="Detter C."/>
            <person name="Do K.F."/>
            <person name="Dobrinski K.P."/>
            <person name="Faza B.I."/>
            <person name="Fitzpatrick K.A."/>
            <person name="Freyermuth S.K."/>
            <person name="Harmer T.L."/>
            <person name="Hauser L.J."/>
            <person name="Huegler M."/>
            <person name="Kerfeld C.A."/>
            <person name="Klotz M.G."/>
            <person name="Kong W.W."/>
            <person name="Land M."/>
            <person name="Lapidus A."/>
            <person name="Larimer F.W."/>
            <person name="Longo D.L."/>
            <person name="Lucas S."/>
            <person name="Malfatti S.A."/>
            <person name="Massey S.E."/>
            <person name="Martin D.D."/>
            <person name="McCuddin Z."/>
            <person name="Meyer F."/>
            <person name="Moore J.L."/>
            <person name="Ocampo L.H. Jr."/>
            <person name="Paul J.H."/>
            <person name="Paulsen I.T."/>
            <person name="Reep D.K."/>
            <person name="Ren Q."/>
            <person name="Ross R.L."/>
            <person name="Sato P.Y."/>
            <person name="Thomas P."/>
            <person name="Tinkham L.E."/>
            <person name="Zeruth G.T."/>
        </authorList>
    </citation>
    <scope>NUCLEOTIDE SEQUENCE [LARGE SCALE GENOMIC DNA]</scope>
    <source>
        <strain>DSM 25203 / XCL-2</strain>
    </source>
</reference>